<keyword id="KW-0472">Membrane</keyword>
<keyword id="KW-1185">Reference proteome</keyword>
<keyword id="KW-0812">Transmembrane</keyword>
<keyword id="KW-1133">Transmembrane helix</keyword>
<organism>
    <name type="scientific">Methanocaldococcus jannaschii (strain ATCC 43067 / DSM 2661 / JAL-1 / JCM 10045 / NBRC 100440)</name>
    <name type="common">Methanococcus jannaschii</name>
    <dbReference type="NCBI Taxonomy" id="243232"/>
    <lineage>
        <taxon>Archaea</taxon>
        <taxon>Methanobacteriati</taxon>
        <taxon>Methanobacteriota</taxon>
        <taxon>Methanomada group</taxon>
        <taxon>Methanococci</taxon>
        <taxon>Methanococcales</taxon>
        <taxon>Methanocaldococcaceae</taxon>
        <taxon>Methanocaldococcus</taxon>
    </lineage>
</organism>
<feature type="chain" id="PRO_0000106914" description="Uncharacterized protein MJ0525">
    <location>
        <begin position="1"/>
        <end position="53"/>
    </location>
</feature>
<feature type="transmembrane region" description="Helical" evidence="1">
    <location>
        <begin position="24"/>
        <end position="44"/>
    </location>
</feature>
<evidence type="ECO:0000255" key="1"/>
<evidence type="ECO:0000305" key="2"/>
<gene>
    <name type="ordered locus">MJ0525</name>
</gene>
<reference key="1">
    <citation type="journal article" date="1996" name="Science">
        <title>Complete genome sequence of the methanogenic archaeon, Methanococcus jannaschii.</title>
        <authorList>
            <person name="Bult C.J."/>
            <person name="White O."/>
            <person name="Olsen G.J."/>
            <person name="Zhou L."/>
            <person name="Fleischmann R.D."/>
            <person name="Sutton G.G."/>
            <person name="Blake J.A."/>
            <person name="FitzGerald L.M."/>
            <person name="Clayton R.A."/>
            <person name="Gocayne J.D."/>
            <person name="Kerlavage A.R."/>
            <person name="Dougherty B.A."/>
            <person name="Tomb J.-F."/>
            <person name="Adams M.D."/>
            <person name="Reich C.I."/>
            <person name="Overbeek R."/>
            <person name="Kirkness E.F."/>
            <person name="Weinstock K.G."/>
            <person name="Merrick J.M."/>
            <person name="Glodek A."/>
            <person name="Scott J.L."/>
            <person name="Geoghagen N.S.M."/>
            <person name="Weidman J.F."/>
            <person name="Fuhrmann J.L."/>
            <person name="Nguyen D."/>
            <person name="Utterback T.R."/>
            <person name="Kelley J.M."/>
            <person name="Peterson J.D."/>
            <person name="Sadow P.W."/>
            <person name="Hanna M.C."/>
            <person name="Cotton M.D."/>
            <person name="Roberts K.M."/>
            <person name="Hurst M.A."/>
            <person name="Kaine B.P."/>
            <person name="Borodovsky M."/>
            <person name="Klenk H.-P."/>
            <person name="Fraser C.M."/>
            <person name="Smith H.O."/>
            <person name="Woese C.R."/>
            <person name="Venter J.C."/>
        </authorList>
    </citation>
    <scope>NUCLEOTIDE SEQUENCE [LARGE SCALE GENOMIC DNA]</scope>
    <source>
        <strain>ATCC 43067 / DSM 2661 / JAL-1 / JCM 10045 / NBRC 100440</strain>
    </source>
</reference>
<accession>Q57945</accession>
<name>Y525_METJA</name>
<proteinExistence type="predicted"/>
<comment type="subcellular location">
    <subcellularLocation>
        <location evidence="2">Membrane</location>
        <topology evidence="2">Single-pass membrane protein</topology>
    </subcellularLocation>
</comment>
<dbReference type="EMBL" id="L77117">
    <property type="protein sequence ID" value="AAB98517.1"/>
    <property type="molecule type" value="Genomic_DNA"/>
</dbReference>
<dbReference type="PIR" id="E64365">
    <property type="entry name" value="E64365"/>
</dbReference>
<dbReference type="FunCoup" id="Q57945">
    <property type="interactions" value="1"/>
</dbReference>
<dbReference type="STRING" id="243232.MJ_0525"/>
<dbReference type="PaxDb" id="243232-MJ_0525"/>
<dbReference type="EnsemblBacteria" id="AAB98517">
    <property type="protein sequence ID" value="AAB98517"/>
    <property type="gene ID" value="MJ_0525"/>
</dbReference>
<dbReference type="KEGG" id="mja:MJ_0525"/>
<dbReference type="eggNOG" id="arCOG04830">
    <property type="taxonomic scope" value="Archaea"/>
</dbReference>
<dbReference type="HOGENOM" id="CLU_3057123_0_0_2"/>
<dbReference type="InParanoid" id="Q57945"/>
<dbReference type="Proteomes" id="UP000000805">
    <property type="component" value="Chromosome"/>
</dbReference>
<dbReference type="GO" id="GO:0016020">
    <property type="term" value="C:membrane"/>
    <property type="evidence" value="ECO:0007669"/>
    <property type="project" value="UniProtKB-SubCell"/>
</dbReference>
<dbReference type="InterPro" id="IPR011317">
    <property type="entry name" value="Prd_NiFe_hyd_3_EhaE"/>
</dbReference>
<dbReference type="Pfam" id="PF09880">
    <property type="entry name" value="DUF2107"/>
    <property type="match status" value="1"/>
</dbReference>
<dbReference type="PIRSF" id="PIRSF036535">
    <property type="entry name" value="EhaE"/>
    <property type="match status" value="1"/>
</dbReference>
<sequence length="53" mass="5837">MLNVEVPTIGVSLIFLAYDEALALMTFIAVNAVLSLILIRAVILDAEYKENNQ</sequence>
<protein>
    <recommendedName>
        <fullName>Uncharacterized protein MJ0525</fullName>
    </recommendedName>
</protein>